<organism>
    <name type="scientific">Escherichia coli</name>
    <dbReference type="NCBI Taxonomy" id="562"/>
    <lineage>
        <taxon>Bacteria</taxon>
        <taxon>Pseudomonadati</taxon>
        <taxon>Pseudomonadota</taxon>
        <taxon>Gammaproteobacteria</taxon>
        <taxon>Enterobacterales</taxon>
        <taxon>Enterobacteriaceae</taxon>
        <taxon>Escherichia</taxon>
    </lineage>
</organism>
<protein>
    <recommendedName>
        <fullName>Insertion element IS1 protein InsB</fullName>
    </recommendedName>
</protein>
<gene>
    <name type="primary">insB</name>
</gene>
<accession>P0CF31</accession>
<accession>P03830</accession>
<accession>P77707</accession>
<accession>Q2MCH3</accession>
<keyword id="KW-0233">DNA recombination</keyword>
<keyword id="KW-0614">Plasmid</keyword>
<keyword id="KW-0814">Transposable element</keyword>
<keyword id="KW-0815">Transposition</keyword>
<name>INSB_ECOLX</name>
<dbReference type="EMBL" id="V00609">
    <property type="protein sequence ID" value="CAA23879.1"/>
    <property type="molecule type" value="Genomic_DNA"/>
</dbReference>
<dbReference type="EMBL" id="J01730">
    <property type="protein sequence ID" value="AAA92259.1"/>
    <property type="status" value="ALT_INIT"/>
    <property type="molecule type" value="Genomic_DNA"/>
</dbReference>
<dbReference type="RefSeq" id="YP_001816589.1">
    <property type="nucleotide sequence ID" value="NC_010558.1"/>
</dbReference>
<dbReference type="RefSeq" id="YP_001816636.1">
    <property type="nucleotide sequence ID" value="NC_010558.1"/>
</dbReference>
<dbReference type="RefSeq" id="YP_001816646.1">
    <property type="nucleotide sequence ID" value="NC_010558.1"/>
</dbReference>
<dbReference type="RefSeq" id="YP_003108319.1">
    <property type="nucleotide sequence ID" value="NC_013122.1"/>
</dbReference>
<dbReference type="RefSeq" id="YP_009071100.1">
    <property type="nucleotide sequence ID" value="NC_025179.1"/>
</dbReference>
<dbReference type="RefSeq" id="YP_009071496.1">
    <property type="nucleotide sequence ID" value="NC_025183.1"/>
</dbReference>
<dbReference type="eggNOG" id="COG1662">
    <property type="taxonomic scope" value="Bacteria"/>
</dbReference>
<dbReference type="eggNOG" id="COG3677">
    <property type="taxonomic scope" value="Bacteria"/>
</dbReference>
<dbReference type="GO" id="GO:0003677">
    <property type="term" value="F:DNA binding"/>
    <property type="evidence" value="ECO:0007669"/>
    <property type="project" value="InterPro"/>
</dbReference>
<dbReference type="GO" id="GO:0004803">
    <property type="term" value="F:transposase activity"/>
    <property type="evidence" value="ECO:0007669"/>
    <property type="project" value="InterPro"/>
</dbReference>
<dbReference type="GO" id="GO:0006313">
    <property type="term" value="P:DNA transposition"/>
    <property type="evidence" value="ECO:0007669"/>
    <property type="project" value="InterPro"/>
</dbReference>
<dbReference type="InterPro" id="IPR005063">
    <property type="entry name" value="Transposase_27"/>
</dbReference>
<dbReference type="InterPro" id="IPR051354">
    <property type="entry name" value="Transposase_27_IS1"/>
</dbReference>
<dbReference type="NCBIfam" id="NF033558">
    <property type="entry name" value="transpos_IS1"/>
    <property type="match status" value="1"/>
</dbReference>
<dbReference type="PANTHER" id="PTHR33293">
    <property type="entry name" value="INSERTION ELEMENT IS1 1 PROTEIN INSB-RELATED"/>
    <property type="match status" value="1"/>
</dbReference>
<dbReference type="PANTHER" id="PTHR33293:SF1">
    <property type="entry name" value="INSERTION ELEMENT IS1 1 PROTEIN INSB-RELATED"/>
    <property type="match status" value="1"/>
</dbReference>
<dbReference type="Pfam" id="PF03400">
    <property type="entry name" value="DDE_Tnp_IS1"/>
    <property type="match status" value="1"/>
</dbReference>
<comment type="function">
    <text>Absolutely required for transposition of IS1.</text>
</comment>
<comment type="similarity">
    <text evidence="1">Belongs to the transposase 27 family.</text>
</comment>
<comment type="sequence caution" evidence="1">
    <conflict type="erroneous initiation">
        <sequence resource="EMBL-CDS" id="AAA92259"/>
    </conflict>
    <text>Truncated N-terminus.</text>
</comment>
<geneLocation type="plasmid">
    <name>IncFII R100</name>
    <name>NR1</name>
</geneLocation>
<evidence type="ECO:0000305" key="1"/>
<proteinExistence type="inferred from homology"/>
<feature type="chain" id="PRO_0000393406" description="Insertion element IS1 protein InsB">
    <location>
        <begin position="1"/>
        <end position="167"/>
    </location>
</feature>
<reference key="1">
    <citation type="journal article" date="1978" name="Proc. Natl. Acad. Sci. U.S.A.">
        <title>Nucleotide sequence of an insertion element, IS1.</title>
        <authorList>
            <person name="Ohtsubo H."/>
            <person name="Ohtsubo E."/>
        </authorList>
    </citation>
    <scope>NUCLEOTIDE SEQUENCE [GENOMIC DNA]</scope>
    <source>
        <plasmid>IncFII R100 (NR1)</plasmid>
    </source>
</reference>
<reference key="2">
    <citation type="journal article" date="1984" name="Proc. Natl. Acad. Sci. U.S.A.">
        <title>Mercuric ion-resistance operons of plasmid R100 and transposon Tn501: the beginning of the operon including the regulatory region and the first two structural genes.</title>
        <authorList>
            <person name="Misra T.K."/>
            <person name="Brown N.L."/>
            <person name="Fritzinger D.C."/>
            <person name="Pridmore R.D."/>
            <person name="Barnes W.M."/>
            <person name="Haberstroh L."/>
            <person name="Silver S."/>
        </authorList>
    </citation>
    <scope>NUCLEOTIDE SEQUENCE [GENOMIC DNA]</scope>
    <source>
        <plasmid>IncFII R100 (NR1)</plasmid>
    </source>
</reference>
<sequence length="167" mass="19634">MPGNRPHYGRWPQHDFTSLKKLRPQSVTSRIQPGSDVIVCAEMDEQWGYVGAKSRQRWLFYAYDSLRKTVVAHVFGERTMATLGRLMSLLSPFDVVIWMTDGWPLYESRLKGKLHVISKRYTQRIERHNLNLRQHLARLGRKSLSFSKSVELHDKVIGHYLNIKHYQ</sequence>